<evidence type="ECO:0000255" key="1">
    <source>
        <dbReference type="HAMAP-Rule" id="MF_00135"/>
    </source>
</evidence>
<dbReference type="EC" id="5.3.1.24" evidence="1"/>
<dbReference type="EMBL" id="CU234118">
    <property type="protein sequence ID" value="CAL74063.1"/>
    <property type="molecule type" value="Genomic_DNA"/>
</dbReference>
<dbReference type="RefSeq" id="WP_011923363.1">
    <property type="nucleotide sequence ID" value="NC_009445.1"/>
</dbReference>
<dbReference type="SMR" id="A4YJI7"/>
<dbReference type="STRING" id="114615.BRADO0092"/>
<dbReference type="KEGG" id="bra:BRADO0092"/>
<dbReference type="eggNOG" id="COG0135">
    <property type="taxonomic scope" value="Bacteria"/>
</dbReference>
<dbReference type="HOGENOM" id="CLU_076364_1_1_5"/>
<dbReference type="OrthoDB" id="9796196at2"/>
<dbReference type="UniPathway" id="UPA00035">
    <property type="reaction ID" value="UER00042"/>
</dbReference>
<dbReference type="Proteomes" id="UP000001994">
    <property type="component" value="Chromosome"/>
</dbReference>
<dbReference type="GO" id="GO:0004640">
    <property type="term" value="F:phosphoribosylanthranilate isomerase activity"/>
    <property type="evidence" value="ECO:0007669"/>
    <property type="project" value="UniProtKB-UniRule"/>
</dbReference>
<dbReference type="GO" id="GO:0000162">
    <property type="term" value="P:L-tryptophan biosynthetic process"/>
    <property type="evidence" value="ECO:0007669"/>
    <property type="project" value="UniProtKB-UniRule"/>
</dbReference>
<dbReference type="CDD" id="cd00405">
    <property type="entry name" value="PRAI"/>
    <property type="match status" value="1"/>
</dbReference>
<dbReference type="Gene3D" id="3.20.20.70">
    <property type="entry name" value="Aldolase class I"/>
    <property type="match status" value="1"/>
</dbReference>
<dbReference type="HAMAP" id="MF_00135">
    <property type="entry name" value="PRAI"/>
    <property type="match status" value="1"/>
</dbReference>
<dbReference type="InterPro" id="IPR013785">
    <property type="entry name" value="Aldolase_TIM"/>
</dbReference>
<dbReference type="InterPro" id="IPR001240">
    <property type="entry name" value="PRAI_dom"/>
</dbReference>
<dbReference type="InterPro" id="IPR011060">
    <property type="entry name" value="RibuloseP-bd_barrel"/>
</dbReference>
<dbReference type="InterPro" id="IPR044643">
    <property type="entry name" value="TrpF_fam"/>
</dbReference>
<dbReference type="NCBIfam" id="NF002295">
    <property type="entry name" value="PRK01222.1-1"/>
    <property type="match status" value="1"/>
</dbReference>
<dbReference type="PANTHER" id="PTHR42894">
    <property type="entry name" value="N-(5'-PHOSPHORIBOSYL)ANTHRANILATE ISOMERASE"/>
    <property type="match status" value="1"/>
</dbReference>
<dbReference type="PANTHER" id="PTHR42894:SF1">
    <property type="entry name" value="N-(5'-PHOSPHORIBOSYL)ANTHRANILATE ISOMERASE"/>
    <property type="match status" value="1"/>
</dbReference>
<dbReference type="Pfam" id="PF00697">
    <property type="entry name" value="PRAI"/>
    <property type="match status" value="1"/>
</dbReference>
<dbReference type="SUPFAM" id="SSF51366">
    <property type="entry name" value="Ribulose-phoshate binding barrel"/>
    <property type="match status" value="1"/>
</dbReference>
<protein>
    <recommendedName>
        <fullName evidence="1">N-(5'-phosphoribosyl)anthranilate isomerase</fullName>
        <shortName evidence="1">PRAI</shortName>
        <ecNumber evidence="1">5.3.1.24</ecNumber>
    </recommendedName>
</protein>
<organism>
    <name type="scientific">Bradyrhizobium sp. (strain ORS 278)</name>
    <dbReference type="NCBI Taxonomy" id="114615"/>
    <lineage>
        <taxon>Bacteria</taxon>
        <taxon>Pseudomonadati</taxon>
        <taxon>Pseudomonadota</taxon>
        <taxon>Alphaproteobacteria</taxon>
        <taxon>Hyphomicrobiales</taxon>
        <taxon>Nitrobacteraceae</taxon>
        <taxon>Bradyrhizobium</taxon>
    </lineage>
</organism>
<gene>
    <name evidence="1" type="primary">trpF</name>
    <name type="ordered locus">BRADO0092</name>
</gene>
<feature type="chain" id="PRO_1000018584" description="N-(5'-phosphoribosyl)anthranilate isomerase">
    <location>
        <begin position="1"/>
        <end position="219"/>
    </location>
</feature>
<sequence>MSLLVKICGLTTPETLDAALDAGAEMVGFVFFPPSPRHVGLTAARELGQQAKGRALKVALTVDADDATFENIVETLRPDLLQLHGRESIARIRDLKQRFGLPVMKAVAVATSADLAPLAGYADVCDRILFDARAPKDATRPGGLGATFDWHVLEALKLDRPFMVSGGLSADNVAEAVRITRAGGVDVSSGVERTPGVKDCDMIRNFIRAARAAEELSVQ</sequence>
<proteinExistence type="inferred from homology"/>
<reference key="1">
    <citation type="journal article" date="2007" name="Science">
        <title>Legumes symbioses: absence of nod genes in photosynthetic bradyrhizobia.</title>
        <authorList>
            <person name="Giraud E."/>
            <person name="Moulin L."/>
            <person name="Vallenet D."/>
            <person name="Barbe V."/>
            <person name="Cytryn E."/>
            <person name="Avarre J.-C."/>
            <person name="Jaubert M."/>
            <person name="Simon D."/>
            <person name="Cartieaux F."/>
            <person name="Prin Y."/>
            <person name="Bena G."/>
            <person name="Hannibal L."/>
            <person name="Fardoux J."/>
            <person name="Kojadinovic M."/>
            <person name="Vuillet L."/>
            <person name="Lajus A."/>
            <person name="Cruveiller S."/>
            <person name="Rouy Z."/>
            <person name="Mangenot S."/>
            <person name="Segurens B."/>
            <person name="Dossat C."/>
            <person name="Franck W.L."/>
            <person name="Chang W.-S."/>
            <person name="Saunders E."/>
            <person name="Bruce D."/>
            <person name="Richardson P."/>
            <person name="Normand P."/>
            <person name="Dreyfus B."/>
            <person name="Pignol D."/>
            <person name="Stacey G."/>
            <person name="Emerich D."/>
            <person name="Vermeglio A."/>
            <person name="Medigue C."/>
            <person name="Sadowsky M."/>
        </authorList>
    </citation>
    <scope>NUCLEOTIDE SEQUENCE [LARGE SCALE GENOMIC DNA]</scope>
    <source>
        <strain>ORS 278</strain>
    </source>
</reference>
<accession>A4YJI7</accession>
<keyword id="KW-0028">Amino-acid biosynthesis</keyword>
<keyword id="KW-0057">Aromatic amino acid biosynthesis</keyword>
<keyword id="KW-0413">Isomerase</keyword>
<keyword id="KW-1185">Reference proteome</keyword>
<keyword id="KW-0822">Tryptophan biosynthesis</keyword>
<comment type="catalytic activity">
    <reaction evidence="1">
        <text>N-(5-phospho-beta-D-ribosyl)anthranilate = 1-(2-carboxyphenylamino)-1-deoxy-D-ribulose 5-phosphate</text>
        <dbReference type="Rhea" id="RHEA:21540"/>
        <dbReference type="ChEBI" id="CHEBI:18277"/>
        <dbReference type="ChEBI" id="CHEBI:58613"/>
        <dbReference type="EC" id="5.3.1.24"/>
    </reaction>
</comment>
<comment type="pathway">
    <text evidence="1">Amino-acid biosynthesis; L-tryptophan biosynthesis; L-tryptophan from chorismate: step 3/5.</text>
</comment>
<comment type="similarity">
    <text evidence="1">Belongs to the TrpF family.</text>
</comment>
<name>TRPF_BRASO</name>